<dbReference type="EMBL" id="AAEY01000019">
    <property type="protein sequence ID" value="EAL21448.1"/>
    <property type="molecule type" value="Genomic_DNA"/>
</dbReference>
<dbReference type="RefSeq" id="XP_776095.1">
    <property type="nucleotide sequence ID" value="XM_771002.1"/>
</dbReference>
<dbReference type="SMR" id="P0CS21"/>
<dbReference type="EnsemblFungi" id="AAW42766">
    <property type="protein sequence ID" value="AAW42766"/>
    <property type="gene ID" value="CND04920"/>
</dbReference>
<dbReference type="GeneID" id="4935532"/>
<dbReference type="KEGG" id="cnb:CNBD1430"/>
<dbReference type="VEuPathDB" id="FungiDB:CNBD1430"/>
<dbReference type="HOGENOM" id="CLU_157438_1_1_1"/>
<dbReference type="OrthoDB" id="9543at5206"/>
<dbReference type="InterPro" id="IPR019034">
    <property type="entry name" value="UPF0390"/>
</dbReference>
<dbReference type="Pfam" id="PF09495">
    <property type="entry name" value="DUF2462"/>
    <property type="match status" value="1"/>
</dbReference>
<name>U390_CRYNB</name>
<gene>
    <name type="ordered locus">CNBD1430</name>
</gene>
<sequence>MAQGAGKSIKAKGKSGGSQRKNTGKTKPGKREVAPKDRQRVLERSQKKQLSSKINNSIEKQMVQAASVGKLSIMRNVGELESGEGKDGKAKGKGKSR</sequence>
<proteinExistence type="inferred from homology"/>
<reference key="1">
    <citation type="journal article" date="2005" name="Science">
        <title>The genome of the basidiomycetous yeast and human pathogen Cryptococcus neoformans.</title>
        <authorList>
            <person name="Loftus B.J."/>
            <person name="Fung E."/>
            <person name="Roncaglia P."/>
            <person name="Rowley D."/>
            <person name="Amedeo P."/>
            <person name="Bruno D."/>
            <person name="Vamathevan J."/>
            <person name="Miranda M."/>
            <person name="Anderson I.J."/>
            <person name="Fraser J.A."/>
            <person name="Allen J.E."/>
            <person name="Bosdet I.E."/>
            <person name="Brent M.R."/>
            <person name="Chiu R."/>
            <person name="Doering T.L."/>
            <person name="Donlin M.J."/>
            <person name="D'Souza C.A."/>
            <person name="Fox D.S."/>
            <person name="Grinberg V."/>
            <person name="Fu J."/>
            <person name="Fukushima M."/>
            <person name="Haas B.J."/>
            <person name="Huang J.C."/>
            <person name="Janbon G."/>
            <person name="Jones S.J.M."/>
            <person name="Koo H.L."/>
            <person name="Krzywinski M.I."/>
            <person name="Kwon-Chung K.J."/>
            <person name="Lengeler K.B."/>
            <person name="Maiti R."/>
            <person name="Marra M.A."/>
            <person name="Marra R.E."/>
            <person name="Mathewson C.A."/>
            <person name="Mitchell T.G."/>
            <person name="Pertea M."/>
            <person name="Riggs F.R."/>
            <person name="Salzberg S.L."/>
            <person name="Schein J.E."/>
            <person name="Shvartsbeyn A."/>
            <person name="Shin H."/>
            <person name="Shumway M."/>
            <person name="Specht C.A."/>
            <person name="Suh B.B."/>
            <person name="Tenney A."/>
            <person name="Utterback T.R."/>
            <person name="Wickes B.L."/>
            <person name="Wortman J.R."/>
            <person name="Wye N.H."/>
            <person name="Kronstad J.W."/>
            <person name="Lodge J.K."/>
            <person name="Heitman J."/>
            <person name="Davis R.W."/>
            <person name="Fraser C.M."/>
            <person name="Hyman R.W."/>
        </authorList>
    </citation>
    <scope>NUCLEOTIDE SEQUENCE [LARGE SCALE GENOMIC DNA]</scope>
    <source>
        <strain>B-3501A</strain>
    </source>
</reference>
<comment type="similarity">
    <text evidence="2">Belongs to the UPF0390 family.</text>
</comment>
<accession>P0CS21</accession>
<accession>Q55UG4</accession>
<accession>Q5KHY0</accession>
<protein>
    <recommendedName>
        <fullName>UPF0390 protein CNBD1430</fullName>
    </recommendedName>
</protein>
<feature type="chain" id="PRO_0000410323" description="UPF0390 protein CNBD1430">
    <location>
        <begin position="1"/>
        <end position="97"/>
    </location>
</feature>
<feature type="region of interest" description="Disordered" evidence="1">
    <location>
        <begin position="1"/>
        <end position="57"/>
    </location>
</feature>
<feature type="region of interest" description="Disordered" evidence="1">
    <location>
        <begin position="75"/>
        <end position="97"/>
    </location>
</feature>
<feature type="compositionally biased region" description="Basic and acidic residues" evidence="1">
    <location>
        <begin position="29"/>
        <end position="46"/>
    </location>
</feature>
<feature type="compositionally biased region" description="Polar residues" evidence="1">
    <location>
        <begin position="48"/>
        <end position="57"/>
    </location>
</feature>
<organism>
    <name type="scientific">Cryptococcus neoformans var. neoformans serotype D (strain B-3501A)</name>
    <name type="common">Filobasidiella neoformans</name>
    <dbReference type="NCBI Taxonomy" id="283643"/>
    <lineage>
        <taxon>Eukaryota</taxon>
        <taxon>Fungi</taxon>
        <taxon>Dikarya</taxon>
        <taxon>Basidiomycota</taxon>
        <taxon>Agaricomycotina</taxon>
        <taxon>Tremellomycetes</taxon>
        <taxon>Tremellales</taxon>
        <taxon>Cryptococcaceae</taxon>
        <taxon>Cryptococcus</taxon>
        <taxon>Cryptococcus neoformans species complex</taxon>
    </lineage>
</organism>
<evidence type="ECO:0000256" key="1">
    <source>
        <dbReference type="SAM" id="MobiDB-lite"/>
    </source>
</evidence>
<evidence type="ECO:0000305" key="2"/>